<organism>
    <name type="scientific">Bifidobacterium adolescentis (strain ATCC 15703 / DSM 20083 / NCTC 11814 / E194a)</name>
    <dbReference type="NCBI Taxonomy" id="367928"/>
    <lineage>
        <taxon>Bacteria</taxon>
        <taxon>Bacillati</taxon>
        <taxon>Actinomycetota</taxon>
        <taxon>Actinomycetes</taxon>
        <taxon>Bifidobacteriales</taxon>
        <taxon>Bifidobacteriaceae</taxon>
        <taxon>Bifidobacterium</taxon>
    </lineage>
</organism>
<protein>
    <recommendedName>
        <fullName evidence="1">3-isopropylmalate dehydratase small subunit</fullName>
        <ecNumber evidence="1">4.2.1.33</ecNumber>
    </recommendedName>
    <alternativeName>
        <fullName evidence="1">Alpha-IPM isomerase</fullName>
        <shortName evidence="1">IPMI</shortName>
    </alternativeName>
    <alternativeName>
        <fullName evidence="1">Isopropylmalate isomerase</fullName>
    </alternativeName>
</protein>
<comment type="function">
    <text evidence="1">Catalyzes the isomerization between 2-isopropylmalate and 3-isopropylmalate, via the formation of 2-isopropylmaleate.</text>
</comment>
<comment type="catalytic activity">
    <reaction evidence="1">
        <text>(2R,3S)-3-isopropylmalate = (2S)-2-isopropylmalate</text>
        <dbReference type="Rhea" id="RHEA:32287"/>
        <dbReference type="ChEBI" id="CHEBI:1178"/>
        <dbReference type="ChEBI" id="CHEBI:35121"/>
        <dbReference type="EC" id="4.2.1.33"/>
    </reaction>
</comment>
<comment type="pathway">
    <text evidence="1">Amino-acid biosynthesis; L-leucine biosynthesis; L-leucine from 3-methyl-2-oxobutanoate: step 2/4.</text>
</comment>
<comment type="subunit">
    <text evidence="1">Heterodimer of LeuC and LeuD.</text>
</comment>
<comment type="similarity">
    <text evidence="1">Belongs to the LeuD family. LeuD type 1 subfamily.</text>
</comment>
<name>LEUD_BIFAA</name>
<sequence>MEKLTTLTGVAVPLRRSNVDTDQIIPAVFLKRVKKSGFDDALFYAWRRDPEFVLNKPEYKQGKILVAGPDFGIGSSREHAVWALHDYGFRVVISSRFADIFYGNTAKNGVLAAIMPQESIELLWKLLDEEPGREMTVSLEDRTVTCGDVTLPFEVNDYTRWRLMNGYDDIDLTLQHEDDIIAYEKMRAEKFPFKPKTLPVKREPEQPIESAREGEYPDWQGPLADRGII</sequence>
<accession>A0ZZS8</accession>
<feature type="chain" id="PRO_1000063735" description="3-isopropylmalate dehydratase small subunit">
    <location>
        <begin position="1"/>
        <end position="229"/>
    </location>
</feature>
<feature type="region of interest" description="Disordered" evidence="2">
    <location>
        <begin position="198"/>
        <end position="229"/>
    </location>
</feature>
<feature type="compositionally biased region" description="Basic and acidic residues" evidence="2">
    <location>
        <begin position="200"/>
        <end position="215"/>
    </location>
</feature>
<dbReference type="EC" id="4.2.1.33" evidence="1"/>
<dbReference type="EMBL" id="AP009256">
    <property type="protein sequence ID" value="BAF38961.1"/>
    <property type="molecule type" value="Genomic_DNA"/>
</dbReference>
<dbReference type="RefSeq" id="WP_011742714.1">
    <property type="nucleotide sequence ID" value="NZ_CAXVJB010000001.1"/>
</dbReference>
<dbReference type="SMR" id="A0ZZS8"/>
<dbReference type="STRING" id="367928.BAD_0180"/>
<dbReference type="PaxDb" id="1680-BADO_0188"/>
<dbReference type="GeneID" id="4556280"/>
<dbReference type="KEGG" id="bad:BAD_0180"/>
<dbReference type="HOGENOM" id="CLU_081378_0_1_11"/>
<dbReference type="UniPathway" id="UPA00048">
    <property type="reaction ID" value="UER00071"/>
</dbReference>
<dbReference type="Proteomes" id="UP000008702">
    <property type="component" value="Chromosome"/>
</dbReference>
<dbReference type="GO" id="GO:0009316">
    <property type="term" value="C:3-isopropylmalate dehydratase complex"/>
    <property type="evidence" value="ECO:0007669"/>
    <property type="project" value="InterPro"/>
</dbReference>
<dbReference type="GO" id="GO:0003861">
    <property type="term" value="F:3-isopropylmalate dehydratase activity"/>
    <property type="evidence" value="ECO:0007669"/>
    <property type="project" value="UniProtKB-UniRule"/>
</dbReference>
<dbReference type="GO" id="GO:0009098">
    <property type="term" value="P:L-leucine biosynthetic process"/>
    <property type="evidence" value="ECO:0007669"/>
    <property type="project" value="UniProtKB-UniRule"/>
</dbReference>
<dbReference type="CDD" id="cd01577">
    <property type="entry name" value="IPMI_Swivel"/>
    <property type="match status" value="1"/>
</dbReference>
<dbReference type="FunFam" id="3.20.19.10:FF:000003">
    <property type="entry name" value="3-isopropylmalate dehydratase small subunit"/>
    <property type="match status" value="1"/>
</dbReference>
<dbReference type="Gene3D" id="3.20.19.10">
    <property type="entry name" value="Aconitase, domain 4"/>
    <property type="match status" value="1"/>
</dbReference>
<dbReference type="HAMAP" id="MF_01031">
    <property type="entry name" value="LeuD_type1"/>
    <property type="match status" value="1"/>
</dbReference>
<dbReference type="InterPro" id="IPR004431">
    <property type="entry name" value="3-IsopropMal_deHydase_ssu"/>
</dbReference>
<dbReference type="InterPro" id="IPR015928">
    <property type="entry name" value="Aconitase/3IPM_dehydase_swvl"/>
</dbReference>
<dbReference type="InterPro" id="IPR000573">
    <property type="entry name" value="AconitaseA/IPMdHydase_ssu_swvl"/>
</dbReference>
<dbReference type="InterPro" id="IPR033940">
    <property type="entry name" value="IPMI_Swivel"/>
</dbReference>
<dbReference type="InterPro" id="IPR050075">
    <property type="entry name" value="LeuD"/>
</dbReference>
<dbReference type="NCBIfam" id="TIGR00171">
    <property type="entry name" value="leuD"/>
    <property type="match status" value="1"/>
</dbReference>
<dbReference type="NCBIfam" id="NF002458">
    <property type="entry name" value="PRK01641.1"/>
    <property type="match status" value="1"/>
</dbReference>
<dbReference type="PANTHER" id="PTHR43345:SF5">
    <property type="entry name" value="3-ISOPROPYLMALATE DEHYDRATASE SMALL SUBUNIT"/>
    <property type="match status" value="1"/>
</dbReference>
<dbReference type="PANTHER" id="PTHR43345">
    <property type="entry name" value="3-ISOPROPYLMALATE DEHYDRATASE SMALL SUBUNIT 2-RELATED-RELATED"/>
    <property type="match status" value="1"/>
</dbReference>
<dbReference type="Pfam" id="PF00694">
    <property type="entry name" value="Aconitase_C"/>
    <property type="match status" value="1"/>
</dbReference>
<dbReference type="SUPFAM" id="SSF52016">
    <property type="entry name" value="LeuD/IlvD-like"/>
    <property type="match status" value="1"/>
</dbReference>
<reference key="1">
    <citation type="submission" date="2006-12" db="EMBL/GenBank/DDBJ databases">
        <title>Bifidobacterium adolescentis complete genome sequence.</title>
        <authorList>
            <person name="Suzuki T."/>
            <person name="Tsuda Y."/>
            <person name="Kanou N."/>
            <person name="Inoue T."/>
            <person name="Kumazaki K."/>
            <person name="Nagano S."/>
            <person name="Hirai S."/>
            <person name="Tanaka K."/>
            <person name="Watanabe K."/>
        </authorList>
    </citation>
    <scope>NUCLEOTIDE SEQUENCE [LARGE SCALE GENOMIC DNA]</scope>
    <source>
        <strain>ATCC 15703 / DSM 20083 / NCTC 11814 / E194a</strain>
    </source>
</reference>
<keyword id="KW-0028">Amino-acid biosynthesis</keyword>
<keyword id="KW-0100">Branched-chain amino acid biosynthesis</keyword>
<keyword id="KW-0432">Leucine biosynthesis</keyword>
<keyword id="KW-0456">Lyase</keyword>
<keyword id="KW-1185">Reference proteome</keyword>
<gene>
    <name evidence="1" type="primary">leuD</name>
    <name type="ordered locus">BAD_0180</name>
</gene>
<proteinExistence type="inferred from homology"/>
<evidence type="ECO:0000255" key="1">
    <source>
        <dbReference type="HAMAP-Rule" id="MF_01031"/>
    </source>
</evidence>
<evidence type="ECO:0000256" key="2">
    <source>
        <dbReference type="SAM" id="MobiDB-lite"/>
    </source>
</evidence>